<reference key="1">
    <citation type="submission" date="2008-08" db="EMBL/GenBank/DDBJ databases">
        <title>The complete genome sequence of Coprothermobacter proteolyticus strain ATCC 5245 / DSM 5265 / BT.</title>
        <authorList>
            <person name="Dodson R.J."/>
            <person name="Durkin A.S."/>
            <person name="Wu M."/>
            <person name="Eisen J."/>
            <person name="Sutton G."/>
        </authorList>
    </citation>
    <scope>NUCLEOTIDE SEQUENCE [LARGE SCALE GENOMIC DNA]</scope>
    <source>
        <strain>ATCC 35245 / DSM 5265 / OCM 4 / BT</strain>
    </source>
</reference>
<accession>B5Y8Q4</accession>
<name>NADE_COPPD</name>
<proteinExistence type="inferred from homology"/>
<dbReference type="EC" id="6.3.1.5" evidence="1"/>
<dbReference type="EMBL" id="CP001145">
    <property type="protein sequence ID" value="ACI18015.1"/>
    <property type="molecule type" value="Genomic_DNA"/>
</dbReference>
<dbReference type="RefSeq" id="WP_012544665.1">
    <property type="nucleotide sequence ID" value="NC_011295.1"/>
</dbReference>
<dbReference type="SMR" id="B5Y8Q4"/>
<dbReference type="STRING" id="309798.COPRO5265_0809"/>
<dbReference type="KEGG" id="cpo:COPRO5265_0809"/>
<dbReference type="eggNOG" id="COG0171">
    <property type="taxonomic scope" value="Bacteria"/>
</dbReference>
<dbReference type="OrthoDB" id="9803818at2"/>
<dbReference type="UniPathway" id="UPA00253">
    <property type="reaction ID" value="UER00333"/>
</dbReference>
<dbReference type="Proteomes" id="UP000001732">
    <property type="component" value="Chromosome"/>
</dbReference>
<dbReference type="GO" id="GO:0005737">
    <property type="term" value="C:cytoplasm"/>
    <property type="evidence" value="ECO:0007669"/>
    <property type="project" value="InterPro"/>
</dbReference>
<dbReference type="GO" id="GO:0005524">
    <property type="term" value="F:ATP binding"/>
    <property type="evidence" value="ECO:0007669"/>
    <property type="project" value="UniProtKB-UniRule"/>
</dbReference>
<dbReference type="GO" id="GO:0004359">
    <property type="term" value="F:glutaminase activity"/>
    <property type="evidence" value="ECO:0007669"/>
    <property type="project" value="InterPro"/>
</dbReference>
<dbReference type="GO" id="GO:0046872">
    <property type="term" value="F:metal ion binding"/>
    <property type="evidence" value="ECO:0007669"/>
    <property type="project" value="UniProtKB-KW"/>
</dbReference>
<dbReference type="GO" id="GO:0003952">
    <property type="term" value="F:NAD+ synthase (glutamine-hydrolyzing) activity"/>
    <property type="evidence" value="ECO:0007669"/>
    <property type="project" value="InterPro"/>
</dbReference>
<dbReference type="GO" id="GO:0008795">
    <property type="term" value="F:NAD+ synthase activity"/>
    <property type="evidence" value="ECO:0007669"/>
    <property type="project" value="UniProtKB-UniRule"/>
</dbReference>
<dbReference type="GO" id="GO:0009435">
    <property type="term" value="P:NAD biosynthetic process"/>
    <property type="evidence" value="ECO:0007669"/>
    <property type="project" value="UniProtKB-UniRule"/>
</dbReference>
<dbReference type="CDD" id="cd00553">
    <property type="entry name" value="NAD_synthase"/>
    <property type="match status" value="1"/>
</dbReference>
<dbReference type="Gene3D" id="3.40.50.620">
    <property type="entry name" value="HUPs"/>
    <property type="match status" value="1"/>
</dbReference>
<dbReference type="HAMAP" id="MF_00193">
    <property type="entry name" value="NadE_ammonia_dep"/>
    <property type="match status" value="1"/>
</dbReference>
<dbReference type="InterPro" id="IPR022310">
    <property type="entry name" value="NAD/GMP_synthase"/>
</dbReference>
<dbReference type="InterPro" id="IPR003694">
    <property type="entry name" value="NAD_synthase"/>
</dbReference>
<dbReference type="InterPro" id="IPR022926">
    <property type="entry name" value="NH(3)-dep_NAD(+)_synth"/>
</dbReference>
<dbReference type="InterPro" id="IPR014729">
    <property type="entry name" value="Rossmann-like_a/b/a_fold"/>
</dbReference>
<dbReference type="NCBIfam" id="TIGR00552">
    <property type="entry name" value="nadE"/>
    <property type="match status" value="1"/>
</dbReference>
<dbReference type="PANTHER" id="PTHR23090:SF9">
    <property type="entry name" value="GLUTAMINE-DEPENDENT NAD(+) SYNTHETASE"/>
    <property type="match status" value="1"/>
</dbReference>
<dbReference type="PANTHER" id="PTHR23090">
    <property type="entry name" value="NH 3 /GLUTAMINE-DEPENDENT NAD + SYNTHETASE"/>
    <property type="match status" value="1"/>
</dbReference>
<dbReference type="Pfam" id="PF02540">
    <property type="entry name" value="NAD_synthase"/>
    <property type="match status" value="2"/>
</dbReference>
<dbReference type="SUPFAM" id="SSF52402">
    <property type="entry name" value="Adenine nucleotide alpha hydrolases-like"/>
    <property type="match status" value="1"/>
</dbReference>
<gene>
    <name evidence="1" type="primary">nadE</name>
    <name type="ordered locus">COPRO5265_0809</name>
</gene>
<sequence length="296" mass="34067">MNTAMEETQRIEQFLRKALVSERKHGYLIGVSGGLDSAVVLKLLVQAVGKENVLGLILPDRDTEKKSTTLARSLLEQEKVPYKVISMTPLLRHLGVYKDMPLFLLPTRGLKESIVRRFYNDYTKKLNKPVFFAQWEEPPTQLPYFYEGIAYYRIKHRVRMATLYYYAEKNDYLLVGCTNLSERLIGFYVKYGDDVCDVAPIAHLYKTEVRQLSEYLSVPEDIRNRPPSPDLIPGITDEYSLGINYETLDQILAGLEEGKTAEDLKQLFPADIVELVINQVKFTQKLEGKPYMLKRA</sequence>
<organism>
    <name type="scientific">Coprothermobacter proteolyticus (strain ATCC 35245 / DSM 5265 / OCM 4 / BT)</name>
    <dbReference type="NCBI Taxonomy" id="309798"/>
    <lineage>
        <taxon>Bacteria</taxon>
        <taxon>Pseudomonadati</taxon>
        <taxon>Coprothermobacterota</taxon>
        <taxon>Coprothermobacteria</taxon>
        <taxon>Coprothermobacterales</taxon>
        <taxon>Coprothermobacteraceae</taxon>
        <taxon>Coprothermobacter</taxon>
    </lineage>
</organism>
<keyword id="KW-0067">ATP-binding</keyword>
<keyword id="KW-0436">Ligase</keyword>
<keyword id="KW-0460">Magnesium</keyword>
<keyword id="KW-0479">Metal-binding</keyword>
<keyword id="KW-0520">NAD</keyword>
<keyword id="KW-0547">Nucleotide-binding</keyword>
<keyword id="KW-1185">Reference proteome</keyword>
<comment type="function">
    <text evidence="1">Catalyzes the ATP-dependent amidation of deamido-NAD to form NAD. Uses ammonia as a nitrogen source.</text>
</comment>
<comment type="catalytic activity">
    <reaction evidence="1">
        <text>deamido-NAD(+) + NH4(+) + ATP = AMP + diphosphate + NAD(+) + H(+)</text>
        <dbReference type="Rhea" id="RHEA:21188"/>
        <dbReference type="ChEBI" id="CHEBI:15378"/>
        <dbReference type="ChEBI" id="CHEBI:28938"/>
        <dbReference type="ChEBI" id="CHEBI:30616"/>
        <dbReference type="ChEBI" id="CHEBI:33019"/>
        <dbReference type="ChEBI" id="CHEBI:57540"/>
        <dbReference type="ChEBI" id="CHEBI:58437"/>
        <dbReference type="ChEBI" id="CHEBI:456215"/>
        <dbReference type="EC" id="6.3.1.5"/>
    </reaction>
</comment>
<comment type="pathway">
    <text evidence="1">Cofactor biosynthesis; NAD(+) biosynthesis; NAD(+) from deamido-NAD(+) (ammonia route): step 1/1.</text>
</comment>
<comment type="subunit">
    <text evidence="1">Homodimer.</text>
</comment>
<comment type="similarity">
    <text evidence="1">Belongs to the NAD synthetase family.</text>
</comment>
<evidence type="ECO:0000255" key="1">
    <source>
        <dbReference type="HAMAP-Rule" id="MF_00193"/>
    </source>
</evidence>
<feature type="chain" id="PRO_1000099017" description="NH(3)-dependent NAD(+) synthetase">
    <location>
        <begin position="1"/>
        <end position="296"/>
    </location>
</feature>
<feature type="binding site" evidence="1">
    <location>
        <begin position="30"/>
        <end position="37"/>
    </location>
    <ligand>
        <name>ATP</name>
        <dbReference type="ChEBI" id="CHEBI:30616"/>
    </ligand>
</feature>
<feature type="binding site" evidence="1">
    <location>
        <position position="36"/>
    </location>
    <ligand>
        <name>Mg(2+)</name>
        <dbReference type="ChEBI" id="CHEBI:18420"/>
    </ligand>
</feature>
<feature type="binding site" evidence="1">
    <location>
        <position position="157"/>
    </location>
    <ligand>
        <name>deamido-NAD(+)</name>
        <dbReference type="ChEBI" id="CHEBI:58437"/>
    </ligand>
</feature>
<feature type="binding site" evidence="1">
    <location>
        <position position="182"/>
    </location>
    <ligand>
        <name>Mg(2+)</name>
        <dbReference type="ChEBI" id="CHEBI:18420"/>
    </ligand>
</feature>
<feature type="binding site" evidence="1">
    <location>
        <position position="190"/>
    </location>
    <ligand>
        <name>deamido-NAD(+)</name>
        <dbReference type="ChEBI" id="CHEBI:58437"/>
    </ligand>
</feature>
<feature type="binding site" evidence="1">
    <location>
        <position position="197"/>
    </location>
    <ligand>
        <name>deamido-NAD(+)</name>
        <dbReference type="ChEBI" id="CHEBI:58437"/>
    </ligand>
</feature>
<feature type="binding site" evidence="1">
    <location>
        <position position="206"/>
    </location>
    <ligand>
        <name>ATP</name>
        <dbReference type="ChEBI" id="CHEBI:30616"/>
    </ligand>
</feature>
<feature type="binding site" evidence="1">
    <location>
        <position position="228"/>
    </location>
    <ligand>
        <name>ATP</name>
        <dbReference type="ChEBI" id="CHEBI:30616"/>
    </ligand>
</feature>
<protein>
    <recommendedName>
        <fullName evidence="1">NH(3)-dependent NAD(+) synthetase</fullName>
        <ecNumber evidence="1">6.3.1.5</ecNumber>
    </recommendedName>
</protein>